<organism>
    <name type="scientific">Orientia tsutsugamushi (strain Ikeda)</name>
    <name type="common">Rickettsia tsutsugamushi</name>
    <dbReference type="NCBI Taxonomy" id="334380"/>
    <lineage>
        <taxon>Bacteria</taxon>
        <taxon>Pseudomonadati</taxon>
        <taxon>Pseudomonadota</taxon>
        <taxon>Alphaproteobacteria</taxon>
        <taxon>Rickettsiales</taxon>
        <taxon>Rickettsiaceae</taxon>
        <taxon>Rickettsieae</taxon>
        <taxon>Orientia</taxon>
    </lineage>
</organism>
<comment type="function">
    <text evidence="1">Involved in mRNA degradation. Catalyzes the phosphorolysis of single-stranded polyribonucleotides processively in the 3'- to 5'-direction.</text>
</comment>
<comment type="catalytic activity">
    <reaction evidence="1">
        <text>RNA(n+1) + phosphate = RNA(n) + a ribonucleoside 5'-diphosphate</text>
        <dbReference type="Rhea" id="RHEA:22096"/>
        <dbReference type="Rhea" id="RHEA-COMP:14527"/>
        <dbReference type="Rhea" id="RHEA-COMP:17342"/>
        <dbReference type="ChEBI" id="CHEBI:43474"/>
        <dbReference type="ChEBI" id="CHEBI:57930"/>
        <dbReference type="ChEBI" id="CHEBI:140395"/>
        <dbReference type="EC" id="2.7.7.8"/>
    </reaction>
</comment>
<comment type="cofactor">
    <cofactor evidence="1">
        <name>Mg(2+)</name>
        <dbReference type="ChEBI" id="CHEBI:18420"/>
    </cofactor>
</comment>
<comment type="subcellular location">
    <subcellularLocation>
        <location evidence="1">Cytoplasm</location>
    </subcellularLocation>
</comment>
<comment type="similarity">
    <text evidence="1">Belongs to the polyribonucleotide nucleotidyltransferase family.</text>
</comment>
<accession>B3CTX1</accession>
<protein>
    <recommendedName>
        <fullName evidence="1">Polyribonucleotide nucleotidyltransferase</fullName>
        <ecNumber evidence="1">2.7.7.8</ecNumber>
    </recommendedName>
    <alternativeName>
        <fullName evidence="1">Polynucleotide phosphorylase</fullName>
        <shortName evidence="1">PNPase</shortName>
    </alternativeName>
</protein>
<keyword id="KW-0963">Cytoplasm</keyword>
<keyword id="KW-0460">Magnesium</keyword>
<keyword id="KW-0479">Metal-binding</keyword>
<keyword id="KW-0548">Nucleotidyltransferase</keyword>
<keyword id="KW-0694">RNA-binding</keyword>
<keyword id="KW-0808">Transferase</keyword>
<reference key="1">
    <citation type="journal article" date="2008" name="DNA Res.">
        <title>The whole-genome sequencing of the obligate intracellular bacterium Orientia tsutsugamushi revealed massive gene amplification during reductive genome evolution.</title>
        <authorList>
            <person name="Nakayama K."/>
            <person name="Yamashita A."/>
            <person name="Kurokawa K."/>
            <person name="Morimoto T."/>
            <person name="Ogawa M."/>
            <person name="Fukuhara M."/>
            <person name="Urakami H."/>
            <person name="Ohnishi M."/>
            <person name="Uchiyama I."/>
            <person name="Ogura Y."/>
            <person name="Ooka T."/>
            <person name="Oshima K."/>
            <person name="Tamura A."/>
            <person name="Hattori M."/>
            <person name="Hayashi T."/>
        </authorList>
    </citation>
    <scope>NUCLEOTIDE SEQUENCE [LARGE SCALE GENOMIC DNA]</scope>
    <source>
        <strain>Ikeda</strain>
    </source>
</reference>
<feature type="chain" id="PRO_1000192478" description="Polyribonucleotide nucleotidyltransferase">
    <location>
        <begin position="1"/>
        <end position="736"/>
    </location>
</feature>
<feature type="domain" description="KH" evidence="1">
    <location>
        <begin position="555"/>
        <end position="614"/>
    </location>
</feature>
<feature type="domain" description="S1 motif" evidence="1">
    <location>
        <begin position="624"/>
        <end position="692"/>
    </location>
</feature>
<feature type="binding site" evidence="1">
    <location>
        <position position="488"/>
    </location>
    <ligand>
        <name>Mg(2+)</name>
        <dbReference type="ChEBI" id="CHEBI:18420"/>
    </ligand>
</feature>
<feature type="binding site" evidence="1">
    <location>
        <position position="494"/>
    </location>
    <ligand>
        <name>Mg(2+)</name>
        <dbReference type="ChEBI" id="CHEBI:18420"/>
    </ligand>
</feature>
<name>PNP_ORITI</name>
<dbReference type="EC" id="2.7.7.8" evidence="1"/>
<dbReference type="EMBL" id="AP008981">
    <property type="protein sequence ID" value="BAG40818.1"/>
    <property type="molecule type" value="Genomic_DNA"/>
</dbReference>
<dbReference type="RefSeq" id="WP_012461866.1">
    <property type="nucleotide sequence ID" value="NC_010793.1"/>
</dbReference>
<dbReference type="SMR" id="B3CTX1"/>
<dbReference type="KEGG" id="ott:OTT_1360"/>
<dbReference type="HOGENOM" id="CLU_004217_2_2_5"/>
<dbReference type="OrthoDB" id="9804305at2"/>
<dbReference type="Proteomes" id="UP000001033">
    <property type="component" value="Chromosome"/>
</dbReference>
<dbReference type="GO" id="GO:0005829">
    <property type="term" value="C:cytosol"/>
    <property type="evidence" value="ECO:0007669"/>
    <property type="project" value="TreeGrafter"/>
</dbReference>
<dbReference type="GO" id="GO:0000175">
    <property type="term" value="F:3'-5'-RNA exonuclease activity"/>
    <property type="evidence" value="ECO:0007669"/>
    <property type="project" value="TreeGrafter"/>
</dbReference>
<dbReference type="GO" id="GO:0000287">
    <property type="term" value="F:magnesium ion binding"/>
    <property type="evidence" value="ECO:0007669"/>
    <property type="project" value="UniProtKB-UniRule"/>
</dbReference>
<dbReference type="GO" id="GO:0004654">
    <property type="term" value="F:polyribonucleotide nucleotidyltransferase activity"/>
    <property type="evidence" value="ECO:0007669"/>
    <property type="project" value="UniProtKB-UniRule"/>
</dbReference>
<dbReference type="GO" id="GO:0003723">
    <property type="term" value="F:RNA binding"/>
    <property type="evidence" value="ECO:0007669"/>
    <property type="project" value="UniProtKB-UniRule"/>
</dbReference>
<dbReference type="GO" id="GO:0006402">
    <property type="term" value="P:mRNA catabolic process"/>
    <property type="evidence" value="ECO:0007669"/>
    <property type="project" value="UniProtKB-UniRule"/>
</dbReference>
<dbReference type="GO" id="GO:0006396">
    <property type="term" value="P:RNA processing"/>
    <property type="evidence" value="ECO:0007669"/>
    <property type="project" value="InterPro"/>
</dbReference>
<dbReference type="CDD" id="cd02393">
    <property type="entry name" value="KH-I_PNPase"/>
    <property type="match status" value="1"/>
</dbReference>
<dbReference type="CDD" id="cd11363">
    <property type="entry name" value="RNase_PH_PNPase_1"/>
    <property type="match status" value="1"/>
</dbReference>
<dbReference type="CDD" id="cd11364">
    <property type="entry name" value="RNase_PH_PNPase_2"/>
    <property type="match status" value="1"/>
</dbReference>
<dbReference type="FunFam" id="3.30.1370.10:FF:000001">
    <property type="entry name" value="Polyribonucleotide nucleotidyltransferase"/>
    <property type="match status" value="1"/>
</dbReference>
<dbReference type="FunFam" id="3.30.230.70:FF:000001">
    <property type="entry name" value="Polyribonucleotide nucleotidyltransferase"/>
    <property type="match status" value="1"/>
</dbReference>
<dbReference type="Gene3D" id="3.30.230.70">
    <property type="entry name" value="GHMP Kinase, N-terminal domain"/>
    <property type="match status" value="2"/>
</dbReference>
<dbReference type="Gene3D" id="3.30.1370.10">
    <property type="entry name" value="K Homology domain, type 1"/>
    <property type="match status" value="1"/>
</dbReference>
<dbReference type="Gene3D" id="2.40.50.140">
    <property type="entry name" value="Nucleic acid-binding proteins"/>
    <property type="match status" value="1"/>
</dbReference>
<dbReference type="HAMAP" id="MF_01595">
    <property type="entry name" value="PNPase"/>
    <property type="match status" value="1"/>
</dbReference>
<dbReference type="InterPro" id="IPR001247">
    <property type="entry name" value="ExoRNase_PH_dom1"/>
</dbReference>
<dbReference type="InterPro" id="IPR015847">
    <property type="entry name" value="ExoRNase_PH_dom2"/>
</dbReference>
<dbReference type="InterPro" id="IPR036345">
    <property type="entry name" value="ExoRNase_PH_dom2_sf"/>
</dbReference>
<dbReference type="InterPro" id="IPR004087">
    <property type="entry name" value="KH_dom"/>
</dbReference>
<dbReference type="InterPro" id="IPR004088">
    <property type="entry name" value="KH_dom_type_1"/>
</dbReference>
<dbReference type="InterPro" id="IPR036612">
    <property type="entry name" value="KH_dom_type_1_sf"/>
</dbReference>
<dbReference type="InterPro" id="IPR012340">
    <property type="entry name" value="NA-bd_OB-fold"/>
</dbReference>
<dbReference type="InterPro" id="IPR012162">
    <property type="entry name" value="PNPase"/>
</dbReference>
<dbReference type="InterPro" id="IPR027408">
    <property type="entry name" value="PNPase/RNase_PH_dom_sf"/>
</dbReference>
<dbReference type="InterPro" id="IPR015848">
    <property type="entry name" value="PNPase_PH_RNA-bd_bac/org-type"/>
</dbReference>
<dbReference type="InterPro" id="IPR036456">
    <property type="entry name" value="PNPase_PH_RNA-bd_sf"/>
</dbReference>
<dbReference type="InterPro" id="IPR020568">
    <property type="entry name" value="Ribosomal_Su5_D2-typ_SF"/>
</dbReference>
<dbReference type="InterPro" id="IPR003029">
    <property type="entry name" value="S1_domain"/>
</dbReference>
<dbReference type="NCBIfam" id="TIGR03591">
    <property type="entry name" value="polynuc_phos"/>
    <property type="match status" value="1"/>
</dbReference>
<dbReference type="NCBIfam" id="NF008805">
    <property type="entry name" value="PRK11824.1"/>
    <property type="match status" value="1"/>
</dbReference>
<dbReference type="PANTHER" id="PTHR11252">
    <property type="entry name" value="POLYRIBONUCLEOTIDE NUCLEOTIDYLTRANSFERASE"/>
    <property type="match status" value="1"/>
</dbReference>
<dbReference type="PANTHER" id="PTHR11252:SF0">
    <property type="entry name" value="POLYRIBONUCLEOTIDE NUCLEOTIDYLTRANSFERASE 1, MITOCHONDRIAL"/>
    <property type="match status" value="1"/>
</dbReference>
<dbReference type="Pfam" id="PF00013">
    <property type="entry name" value="KH_1"/>
    <property type="match status" value="1"/>
</dbReference>
<dbReference type="Pfam" id="PF03726">
    <property type="entry name" value="PNPase"/>
    <property type="match status" value="1"/>
</dbReference>
<dbReference type="Pfam" id="PF01138">
    <property type="entry name" value="RNase_PH"/>
    <property type="match status" value="2"/>
</dbReference>
<dbReference type="Pfam" id="PF03725">
    <property type="entry name" value="RNase_PH_C"/>
    <property type="match status" value="1"/>
</dbReference>
<dbReference type="Pfam" id="PF00575">
    <property type="entry name" value="S1"/>
    <property type="match status" value="1"/>
</dbReference>
<dbReference type="PIRSF" id="PIRSF005499">
    <property type="entry name" value="PNPase"/>
    <property type="match status" value="1"/>
</dbReference>
<dbReference type="SMART" id="SM00322">
    <property type="entry name" value="KH"/>
    <property type="match status" value="1"/>
</dbReference>
<dbReference type="SMART" id="SM00316">
    <property type="entry name" value="S1"/>
    <property type="match status" value="1"/>
</dbReference>
<dbReference type="SUPFAM" id="SSF54791">
    <property type="entry name" value="Eukaryotic type KH-domain (KH-domain type I)"/>
    <property type="match status" value="1"/>
</dbReference>
<dbReference type="SUPFAM" id="SSF50249">
    <property type="entry name" value="Nucleic acid-binding proteins"/>
    <property type="match status" value="1"/>
</dbReference>
<dbReference type="SUPFAM" id="SSF46915">
    <property type="entry name" value="Polynucleotide phosphorylase/guanosine pentaphosphate synthase (PNPase/GPSI), domain 3"/>
    <property type="match status" value="1"/>
</dbReference>
<dbReference type="SUPFAM" id="SSF55666">
    <property type="entry name" value="Ribonuclease PH domain 2-like"/>
    <property type="match status" value="2"/>
</dbReference>
<dbReference type="SUPFAM" id="SSF54211">
    <property type="entry name" value="Ribosomal protein S5 domain 2-like"/>
    <property type="match status" value="2"/>
</dbReference>
<dbReference type="PROSITE" id="PS50084">
    <property type="entry name" value="KH_TYPE_1"/>
    <property type="match status" value="1"/>
</dbReference>
<dbReference type="PROSITE" id="PS50126">
    <property type="entry name" value="S1"/>
    <property type="match status" value="1"/>
</dbReference>
<sequence>MFNEILKKVDWHGNMLSLSTGKIARNADGAVLASMGNTSVLCTVVFDKNTKKDIDFFPLGVYYREMAYAAGKIPGGFIKKEGKFSEYEVLVSRLIDRSIRPLFDSNFRNDTQVICTVMSYDPRYSPDILAIIGSSAALAISGIPIVKPIGAARVGIVNDEFILNPVIHDNTGVNELDLVVAATFDSVTMIEAQACEIDEEKMLAAIEFGYKSLKPVINAIEEIKSSIRKDIFEVTARPHLRYNDEILKHFSSDIKSALLLQTKNERNQQLQLIQQKVVDYFSSEANDDDAILNIEKALDDVKSKIFRDLVLQDKTRIGNRAIDEIRPIICEAGLFNTVHGSALFTRGDTQSLATITLGSSTDEQIVEQLNKCERQNFLLDYIFLPYSVGEISPLRAASRREIGHGWLAKKAIQLVIPSKDVFPYTIRIVSEITQSDGSSSMATVCSASLSLMEAGVPIKTHVAGIAMGLVLGEGNKFEILSDISGCEDHLGDMDFKVASTKNGITALQLDIKVQGINLSMIESTFRQAKIGINHILNVMNNTISCPKSELSTYAPMVQTLEIQKEKIRDVIGLGGKVIKELCKTFDVEIDISENGEVKVWGNVGENVKKAVQSIENIVFVPQIGDIFDGEVVKVIESGAFIKYVTGRDGFVHISEINDTHIKDINAHVKLGDKVKVKIIGIDHKNRVKLTLRTDKEHCKNKNEQYNDITTTTGSVKKKIKIAPKEAAVISNRKYFD</sequence>
<evidence type="ECO:0000255" key="1">
    <source>
        <dbReference type="HAMAP-Rule" id="MF_01595"/>
    </source>
</evidence>
<proteinExistence type="inferred from homology"/>
<gene>
    <name evidence="1" type="primary">pnp</name>
    <name type="ordered locus">OTT_1360</name>
</gene>